<gene>
    <name evidence="1" type="primary">rplF</name>
    <name type="ordered locus">CC_1263</name>
</gene>
<name>RL6_CAUVC</name>
<accession>Q9A8T8</accession>
<comment type="function">
    <text evidence="1">This protein binds to the 23S rRNA, and is important in its secondary structure. It is located near the subunit interface in the base of the L7/L12 stalk, and near the tRNA binding site of the peptidyltransferase center.</text>
</comment>
<comment type="subunit">
    <text evidence="1">Part of the 50S ribosomal subunit.</text>
</comment>
<comment type="similarity">
    <text evidence="1">Belongs to the universal ribosomal protein uL6 family.</text>
</comment>
<feature type="chain" id="PRO_0000260847" description="Large ribosomal subunit protein uL6">
    <location>
        <begin position="1"/>
        <end position="177"/>
    </location>
</feature>
<feature type="region of interest" description="Disordered" evidence="2">
    <location>
        <begin position="157"/>
        <end position="177"/>
    </location>
</feature>
<organism>
    <name type="scientific">Caulobacter vibrioides (strain ATCC 19089 / CIP 103742 / CB 15)</name>
    <name type="common">Caulobacter crescentus</name>
    <dbReference type="NCBI Taxonomy" id="190650"/>
    <lineage>
        <taxon>Bacteria</taxon>
        <taxon>Pseudomonadati</taxon>
        <taxon>Pseudomonadota</taxon>
        <taxon>Alphaproteobacteria</taxon>
        <taxon>Caulobacterales</taxon>
        <taxon>Caulobacteraceae</taxon>
        <taxon>Caulobacter</taxon>
    </lineage>
</organism>
<keyword id="KW-1185">Reference proteome</keyword>
<keyword id="KW-0687">Ribonucleoprotein</keyword>
<keyword id="KW-0689">Ribosomal protein</keyword>
<keyword id="KW-0694">RNA-binding</keyword>
<keyword id="KW-0699">rRNA-binding</keyword>
<dbReference type="EMBL" id="AE005673">
    <property type="protein sequence ID" value="AAK23244.1"/>
    <property type="molecule type" value="Genomic_DNA"/>
</dbReference>
<dbReference type="PIR" id="H87405">
    <property type="entry name" value="H87405"/>
</dbReference>
<dbReference type="RefSeq" id="NP_420076.1">
    <property type="nucleotide sequence ID" value="NC_002696.2"/>
</dbReference>
<dbReference type="RefSeq" id="WP_010919142.1">
    <property type="nucleotide sequence ID" value="NC_002696.2"/>
</dbReference>
<dbReference type="SMR" id="Q9A8T8"/>
<dbReference type="STRING" id="190650.CC_1263"/>
<dbReference type="EnsemblBacteria" id="AAK23244">
    <property type="protein sequence ID" value="AAK23244"/>
    <property type="gene ID" value="CC_1263"/>
</dbReference>
<dbReference type="KEGG" id="ccr:CC_1263"/>
<dbReference type="PATRIC" id="fig|190650.5.peg.1288"/>
<dbReference type="eggNOG" id="COG0097">
    <property type="taxonomic scope" value="Bacteria"/>
</dbReference>
<dbReference type="HOGENOM" id="CLU_065464_1_2_5"/>
<dbReference type="BioCyc" id="CAULO:CC1263-MONOMER"/>
<dbReference type="Proteomes" id="UP000001816">
    <property type="component" value="Chromosome"/>
</dbReference>
<dbReference type="GO" id="GO:0022625">
    <property type="term" value="C:cytosolic large ribosomal subunit"/>
    <property type="evidence" value="ECO:0007669"/>
    <property type="project" value="TreeGrafter"/>
</dbReference>
<dbReference type="GO" id="GO:0019843">
    <property type="term" value="F:rRNA binding"/>
    <property type="evidence" value="ECO:0007669"/>
    <property type="project" value="UniProtKB-UniRule"/>
</dbReference>
<dbReference type="GO" id="GO:0003735">
    <property type="term" value="F:structural constituent of ribosome"/>
    <property type="evidence" value="ECO:0007669"/>
    <property type="project" value="InterPro"/>
</dbReference>
<dbReference type="GO" id="GO:0002181">
    <property type="term" value="P:cytoplasmic translation"/>
    <property type="evidence" value="ECO:0007669"/>
    <property type="project" value="TreeGrafter"/>
</dbReference>
<dbReference type="FunFam" id="3.90.930.12:FF:000001">
    <property type="entry name" value="50S ribosomal protein L6"/>
    <property type="match status" value="1"/>
</dbReference>
<dbReference type="FunFam" id="3.90.930.12:FF:000002">
    <property type="entry name" value="50S ribosomal protein L6"/>
    <property type="match status" value="1"/>
</dbReference>
<dbReference type="Gene3D" id="3.90.930.12">
    <property type="entry name" value="Ribosomal protein L6, alpha-beta domain"/>
    <property type="match status" value="2"/>
</dbReference>
<dbReference type="HAMAP" id="MF_01365_B">
    <property type="entry name" value="Ribosomal_uL6_B"/>
    <property type="match status" value="1"/>
</dbReference>
<dbReference type="InterPro" id="IPR000702">
    <property type="entry name" value="Ribosomal_uL6-like"/>
</dbReference>
<dbReference type="InterPro" id="IPR036789">
    <property type="entry name" value="Ribosomal_uL6-like_a/b-dom_sf"/>
</dbReference>
<dbReference type="InterPro" id="IPR020040">
    <property type="entry name" value="Ribosomal_uL6_a/b-dom"/>
</dbReference>
<dbReference type="InterPro" id="IPR019906">
    <property type="entry name" value="Ribosomal_uL6_bac-type"/>
</dbReference>
<dbReference type="InterPro" id="IPR002358">
    <property type="entry name" value="Ribosomal_uL6_CS"/>
</dbReference>
<dbReference type="NCBIfam" id="TIGR03654">
    <property type="entry name" value="L6_bact"/>
    <property type="match status" value="1"/>
</dbReference>
<dbReference type="PANTHER" id="PTHR11655">
    <property type="entry name" value="60S/50S RIBOSOMAL PROTEIN L6/L9"/>
    <property type="match status" value="1"/>
</dbReference>
<dbReference type="PANTHER" id="PTHR11655:SF14">
    <property type="entry name" value="LARGE RIBOSOMAL SUBUNIT PROTEIN UL6M"/>
    <property type="match status" value="1"/>
</dbReference>
<dbReference type="Pfam" id="PF00347">
    <property type="entry name" value="Ribosomal_L6"/>
    <property type="match status" value="2"/>
</dbReference>
<dbReference type="PIRSF" id="PIRSF002162">
    <property type="entry name" value="Ribosomal_L6"/>
    <property type="match status" value="1"/>
</dbReference>
<dbReference type="PRINTS" id="PR00059">
    <property type="entry name" value="RIBOSOMALL6"/>
</dbReference>
<dbReference type="SUPFAM" id="SSF56053">
    <property type="entry name" value="Ribosomal protein L6"/>
    <property type="match status" value="2"/>
</dbReference>
<dbReference type="PROSITE" id="PS00525">
    <property type="entry name" value="RIBOSOMAL_L6_1"/>
    <property type="match status" value="1"/>
</dbReference>
<protein>
    <recommendedName>
        <fullName evidence="1">Large ribosomal subunit protein uL6</fullName>
    </recommendedName>
    <alternativeName>
        <fullName evidence="3">50S ribosomal protein L6</fullName>
    </alternativeName>
</protein>
<evidence type="ECO:0000255" key="1">
    <source>
        <dbReference type="HAMAP-Rule" id="MF_01365"/>
    </source>
</evidence>
<evidence type="ECO:0000256" key="2">
    <source>
        <dbReference type="SAM" id="MobiDB-lite"/>
    </source>
</evidence>
<evidence type="ECO:0000305" key="3"/>
<proteinExistence type="inferred from homology"/>
<sequence>MSRIGKKAVAIPSGVQVTLAGQTVTVKGPKGQLSWTIADEVEVKQEGAELLLAPRVDTKRAKGMWGLSRTLVANMVHGVTVGFEESLELVGVGYRAAMKGTALSLQLGFSHDVDVAAPAGVTFAVPKQTEIKIAGIDKQAVGEIAAKIRRIRPPEPYKGKGVRYAGEKVRRKEGKKK</sequence>
<reference key="1">
    <citation type="journal article" date="2001" name="Proc. Natl. Acad. Sci. U.S.A.">
        <title>Complete genome sequence of Caulobacter crescentus.</title>
        <authorList>
            <person name="Nierman W.C."/>
            <person name="Feldblyum T.V."/>
            <person name="Laub M.T."/>
            <person name="Paulsen I.T."/>
            <person name="Nelson K.E."/>
            <person name="Eisen J.A."/>
            <person name="Heidelberg J.F."/>
            <person name="Alley M.R.K."/>
            <person name="Ohta N."/>
            <person name="Maddock J.R."/>
            <person name="Potocka I."/>
            <person name="Nelson W.C."/>
            <person name="Newton A."/>
            <person name="Stephens C."/>
            <person name="Phadke N.D."/>
            <person name="Ely B."/>
            <person name="DeBoy R.T."/>
            <person name="Dodson R.J."/>
            <person name="Durkin A.S."/>
            <person name="Gwinn M.L."/>
            <person name="Haft D.H."/>
            <person name="Kolonay J.F."/>
            <person name="Smit J."/>
            <person name="Craven M.B."/>
            <person name="Khouri H.M."/>
            <person name="Shetty J."/>
            <person name="Berry K.J."/>
            <person name="Utterback T.R."/>
            <person name="Tran K."/>
            <person name="Wolf A.M."/>
            <person name="Vamathevan J.J."/>
            <person name="Ermolaeva M.D."/>
            <person name="White O."/>
            <person name="Salzberg S.L."/>
            <person name="Venter J.C."/>
            <person name="Shapiro L."/>
            <person name="Fraser C.M."/>
        </authorList>
    </citation>
    <scope>NUCLEOTIDE SEQUENCE [LARGE SCALE GENOMIC DNA]</scope>
    <source>
        <strain>ATCC 19089 / CIP 103742 / CB 15</strain>
    </source>
</reference>